<proteinExistence type="inferred from homology"/>
<gene>
    <name evidence="1" type="primary">nadK</name>
    <name type="ordered locus">CKL_1233</name>
</gene>
<sequence length="283" mass="31685">MKNIGINVNTTKDPNKEMLNFIIESIKNIDKSVNIKTYENCMGLDENESSSLDVIIVLGGDGTILNTSRNVLRSKTPILGINIGHLGFLAQVEINSVEAALEKLFRGEYTIEKRDMIQCTYNEGNKIKRYDGLNDVVLYRGIKSRIQRYDVYINDAFYNSFSGDGIIICTSTGSTAYNLSAGGPIIHPLLDVLCLTPMYSQFFASRSIVLDSRSLISISIEKNYEDSFLSIDGQKWVAVNGSQTIKINKSKNKRRLIKFDDAYFNTLREKIIFNAKGCEGGIL</sequence>
<accession>A5N7J4</accession>
<name>NADK_CLOK5</name>
<dbReference type="EC" id="2.7.1.23" evidence="1"/>
<dbReference type="EMBL" id="CP000673">
    <property type="protein sequence ID" value="EDK33275.1"/>
    <property type="molecule type" value="Genomic_DNA"/>
</dbReference>
<dbReference type="RefSeq" id="WP_012101619.1">
    <property type="nucleotide sequence ID" value="NC_009706.1"/>
</dbReference>
<dbReference type="SMR" id="A5N7J4"/>
<dbReference type="STRING" id="431943.CKL_1233"/>
<dbReference type="KEGG" id="ckl:CKL_1233"/>
<dbReference type="eggNOG" id="COG0061">
    <property type="taxonomic scope" value="Bacteria"/>
</dbReference>
<dbReference type="HOGENOM" id="CLU_008831_0_1_9"/>
<dbReference type="Proteomes" id="UP000002411">
    <property type="component" value="Chromosome"/>
</dbReference>
<dbReference type="GO" id="GO:0005737">
    <property type="term" value="C:cytoplasm"/>
    <property type="evidence" value="ECO:0007669"/>
    <property type="project" value="UniProtKB-SubCell"/>
</dbReference>
<dbReference type="GO" id="GO:0005524">
    <property type="term" value="F:ATP binding"/>
    <property type="evidence" value="ECO:0007669"/>
    <property type="project" value="UniProtKB-KW"/>
</dbReference>
<dbReference type="GO" id="GO:0046872">
    <property type="term" value="F:metal ion binding"/>
    <property type="evidence" value="ECO:0007669"/>
    <property type="project" value="UniProtKB-UniRule"/>
</dbReference>
<dbReference type="GO" id="GO:0051287">
    <property type="term" value="F:NAD binding"/>
    <property type="evidence" value="ECO:0007669"/>
    <property type="project" value="UniProtKB-ARBA"/>
</dbReference>
<dbReference type="GO" id="GO:0003951">
    <property type="term" value="F:NAD+ kinase activity"/>
    <property type="evidence" value="ECO:0007669"/>
    <property type="project" value="UniProtKB-UniRule"/>
</dbReference>
<dbReference type="GO" id="GO:0019674">
    <property type="term" value="P:NAD metabolic process"/>
    <property type="evidence" value="ECO:0007669"/>
    <property type="project" value="InterPro"/>
</dbReference>
<dbReference type="GO" id="GO:0006741">
    <property type="term" value="P:NADP biosynthetic process"/>
    <property type="evidence" value="ECO:0007669"/>
    <property type="project" value="UniProtKB-UniRule"/>
</dbReference>
<dbReference type="Gene3D" id="3.40.50.10330">
    <property type="entry name" value="Probable inorganic polyphosphate/atp-NAD kinase, domain 1"/>
    <property type="match status" value="1"/>
</dbReference>
<dbReference type="Gene3D" id="2.60.200.30">
    <property type="entry name" value="Probable inorganic polyphosphate/atp-NAD kinase, domain 2"/>
    <property type="match status" value="1"/>
</dbReference>
<dbReference type="HAMAP" id="MF_00361">
    <property type="entry name" value="NAD_kinase"/>
    <property type="match status" value="1"/>
</dbReference>
<dbReference type="InterPro" id="IPR017438">
    <property type="entry name" value="ATP-NAD_kinase_N"/>
</dbReference>
<dbReference type="InterPro" id="IPR017437">
    <property type="entry name" value="ATP-NAD_kinase_PpnK-typ_C"/>
</dbReference>
<dbReference type="InterPro" id="IPR016064">
    <property type="entry name" value="NAD/diacylglycerol_kinase_sf"/>
</dbReference>
<dbReference type="InterPro" id="IPR002504">
    <property type="entry name" value="NADK"/>
</dbReference>
<dbReference type="PANTHER" id="PTHR20275">
    <property type="entry name" value="NAD KINASE"/>
    <property type="match status" value="1"/>
</dbReference>
<dbReference type="PANTHER" id="PTHR20275:SF0">
    <property type="entry name" value="NAD KINASE"/>
    <property type="match status" value="1"/>
</dbReference>
<dbReference type="Pfam" id="PF01513">
    <property type="entry name" value="NAD_kinase"/>
    <property type="match status" value="1"/>
</dbReference>
<dbReference type="Pfam" id="PF20143">
    <property type="entry name" value="NAD_kinase_C"/>
    <property type="match status" value="1"/>
</dbReference>
<dbReference type="SUPFAM" id="SSF111331">
    <property type="entry name" value="NAD kinase/diacylglycerol kinase-like"/>
    <property type="match status" value="1"/>
</dbReference>
<reference key="1">
    <citation type="journal article" date="2008" name="Proc. Natl. Acad. Sci. U.S.A.">
        <title>The genome of Clostridium kluyveri, a strict anaerobe with unique metabolic features.</title>
        <authorList>
            <person name="Seedorf H."/>
            <person name="Fricke W.F."/>
            <person name="Veith B."/>
            <person name="Brueggemann H."/>
            <person name="Liesegang H."/>
            <person name="Strittmatter A."/>
            <person name="Miethke M."/>
            <person name="Buckel W."/>
            <person name="Hinderberger J."/>
            <person name="Li F."/>
            <person name="Hagemeier C."/>
            <person name="Thauer R.K."/>
            <person name="Gottschalk G."/>
        </authorList>
    </citation>
    <scope>NUCLEOTIDE SEQUENCE [LARGE SCALE GENOMIC DNA]</scope>
    <source>
        <strain>ATCC 8527 / DSM 555 / NBRC 12016 / NCIMB 10680 / K1</strain>
    </source>
</reference>
<keyword id="KW-0067">ATP-binding</keyword>
<keyword id="KW-0963">Cytoplasm</keyword>
<keyword id="KW-0418">Kinase</keyword>
<keyword id="KW-0520">NAD</keyword>
<keyword id="KW-0521">NADP</keyword>
<keyword id="KW-0547">Nucleotide-binding</keyword>
<keyword id="KW-1185">Reference proteome</keyword>
<keyword id="KW-0808">Transferase</keyword>
<evidence type="ECO:0000255" key="1">
    <source>
        <dbReference type="HAMAP-Rule" id="MF_00361"/>
    </source>
</evidence>
<protein>
    <recommendedName>
        <fullName evidence="1">NAD kinase</fullName>
        <ecNumber evidence="1">2.7.1.23</ecNumber>
    </recommendedName>
    <alternativeName>
        <fullName evidence="1">ATP-dependent NAD kinase</fullName>
    </alternativeName>
</protein>
<organism>
    <name type="scientific">Clostridium kluyveri (strain ATCC 8527 / DSM 555 / NBRC 12016 / NCIMB 10680 / K1)</name>
    <dbReference type="NCBI Taxonomy" id="431943"/>
    <lineage>
        <taxon>Bacteria</taxon>
        <taxon>Bacillati</taxon>
        <taxon>Bacillota</taxon>
        <taxon>Clostridia</taxon>
        <taxon>Eubacteriales</taxon>
        <taxon>Clostridiaceae</taxon>
        <taxon>Clostridium</taxon>
    </lineage>
</organism>
<comment type="function">
    <text evidence="1">Involved in the regulation of the intracellular balance of NAD and NADP, and is a key enzyme in the biosynthesis of NADP. Catalyzes specifically the phosphorylation on 2'-hydroxyl of the adenosine moiety of NAD to yield NADP.</text>
</comment>
<comment type="catalytic activity">
    <reaction evidence="1">
        <text>NAD(+) + ATP = ADP + NADP(+) + H(+)</text>
        <dbReference type="Rhea" id="RHEA:18629"/>
        <dbReference type="ChEBI" id="CHEBI:15378"/>
        <dbReference type="ChEBI" id="CHEBI:30616"/>
        <dbReference type="ChEBI" id="CHEBI:57540"/>
        <dbReference type="ChEBI" id="CHEBI:58349"/>
        <dbReference type="ChEBI" id="CHEBI:456216"/>
        <dbReference type="EC" id="2.7.1.23"/>
    </reaction>
</comment>
<comment type="cofactor">
    <cofactor evidence="1">
        <name>a divalent metal cation</name>
        <dbReference type="ChEBI" id="CHEBI:60240"/>
    </cofactor>
</comment>
<comment type="subcellular location">
    <subcellularLocation>
        <location evidence="1">Cytoplasm</location>
    </subcellularLocation>
</comment>
<comment type="similarity">
    <text evidence="1">Belongs to the NAD kinase family.</text>
</comment>
<feature type="chain" id="PRO_1000079483" description="NAD kinase">
    <location>
        <begin position="1"/>
        <end position="283"/>
    </location>
</feature>
<feature type="active site" description="Proton acceptor" evidence="1">
    <location>
        <position position="61"/>
    </location>
</feature>
<feature type="binding site" evidence="1">
    <location>
        <begin position="61"/>
        <end position="62"/>
    </location>
    <ligand>
        <name>NAD(+)</name>
        <dbReference type="ChEBI" id="CHEBI:57540"/>
    </ligand>
</feature>
<feature type="binding site" evidence="1">
    <location>
        <begin position="134"/>
        <end position="135"/>
    </location>
    <ligand>
        <name>NAD(+)</name>
        <dbReference type="ChEBI" id="CHEBI:57540"/>
    </ligand>
</feature>
<feature type="binding site" evidence="1">
    <location>
        <position position="145"/>
    </location>
    <ligand>
        <name>NAD(+)</name>
        <dbReference type="ChEBI" id="CHEBI:57540"/>
    </ligand>
</feature>
<feature type="binding site" evidence="1">
    <location>
        <position position="164"/>
    </location>
    <ligand>
        <name>NAD(+)</name>
        <dbReference type="ChEBI" id="CHEBI:57540"/>
    </ligand>
</feature>
<feature type="binding site" evidence="1">
    <location>
        <begin position="175"/>
        <end position="180"/>
    </location>
    <ligand>
        <name>NAD(+)</name>
        <dbReference type="ChEBI" id="CHEBI:57540"/>
    </ligand>
</feature>
<feature type="binding site" evidence="1">
    <location>
        <position position="234"/>
    </location>
    <ligand>
        <name>NAD(+)</name>
        <dbReference type="ChEBI" id="CHEBI:57540"/>
    </ligand>
</feature>